<proteinExistence type="evidence at protein level"/>
<comment type="function">
    <text evidence="1 3">Involved in protein export. Acts as a chaperone by maintaining the newly synthesized protein in an open conformation. Functions as a peptidyl-prolyl cis-trans isomerase (By similarity). Protects the cells against high-temperatures and aids in the restoration of enzyme activity of thermally denaturated proteins (PubMed:36671761). Contributes to tolerance and adaptation to host-generated stresses (PubMed:36671761). Has strong immunomodulatory potential and modifies the cytokine profile of the host towards the proinflammatory axis (PubMed:36671761).</text>
</comment>
<comment type="catalytic activity">
    <reaction evidence="1 3">
        <text>[protein]-peptidylproline (omega=180) = [protein]-peptidylproline (omega=0)</text>
        <dbReference type="Rhea" id="RHEA:16237"/>
        <dbReference type="Rhea" id="RHEA-COMP:10747"/>
        <dbReference type="Rhea" id="RHEA-COMP:10748"/>
        <dbReference type="ChEBI" id="CHEBI:83833"/>
        <dbReference type="ChEBI" id="CHEBI:83834"/>
        <dbReference type="EC" id="5.2.1.8"/>
    </reaction>
</comment>
<comment type="subcellular location">
    <subcellularLocation>
        <location evidence="1">Cytoplasm</location>
    </subcellularLocation>
    <text evidence="1">About half TF is bound to the ribosome near the polypeptide exit tunnel while the other half is free in the cytoplasm.</text>
</comment>
<comment type="domain">
    <text evidence="1">Consists of 3 domains; the N-terminus binds the ribosome, the middle domain has PPIase activity, while the C-terminus has intrinsic chaperone activity on its own.</text>
</comment>
<comment type="miscellaneous">
    <text evidence="3">Expression in M.smegmatis enhances its survival within macrophages, adaptation to oxidative stress and biofilm formation.</text>
</comment>
<comment type="similarity">
    <text evidence="1">Belongs to the FKBP-type PPIase family. Tig subfamily.</text>
</comment>
<accession>P9WG55</accession>
<accession>L0T9P7</accession>
<accession>O53189</accession>
<feature type="chain" id="PRO_0000179391" description="Trigger factor">
    <location>
        <begin position="1"/>
        <end position="466"/>
    </location>
</feature>
<feature type="domain" description="PPIase FKBP-type" evidence="1">
    <location>
        <begin position="162"/>
        <end position="215"/>
    </location>
</feature>
<feature type="region of interest" description="Disordered" evidence="2">
    <location>
        <begin position="428"/>
        <end position="466"/>
    </location>
</feature>
<feature type="compositionally biased region" description="Low complexity" evidence="2">
    <location>
        <begin position="457"/>
        <end position="466"/>
    </location>
</feature>
<evidence type="ECO:0000255" key="1">
    <source>
        <dbReference type="HAMAP-Rule" id="MF_00303"/>
    </source>
</evidence>
<evidence type="ECO:0000256" key="2">
    <source>
        <dbReference type="SAM" id="MobiDB-lite"/>
    </source>
</evidence>
<evidence type="ECO:0000269" key="3">
    <source>
    </source>
</evidence>
<evidence type="ECO:0000303" key="4">
    <source>
    </source>
</evidence>
<name>TIG_MYCTU</name>
<gene>
    <name evidence="1 4" type="primary">tig</name>
    <name type="ordered locus">Rv2462c</name>
    <name type="ORF">MTV008.18c</name>
</gene>
<organism>
    <name type="scientific">Mycobacterium tuberculosis (strain ATCC 25618 / H37Rv)</name>
    <dbReference type="NCBI Taxonomy" id="83332"/>
    <lineage>
        <taxon>Bacteria</taxon>
        <taxon>Bacillati</taxon>
        <taxon>Actinomycetota</taxon>
        <taxon>Actinomycetes</taxon>
        <taxon>Mycobacteriales</taxon>
        <taxon>Mycobacteriaceae</taxon>
        <taxon>Mycobacterium</taxon>
        <taxon>Mycobacterium tuberculosis complex</taxon>
    </lineage>
</organism>
<sequence>MKSTVEQLSPTRVRINVEVPFAELEPDFQRAYKELAKQVRLPGFRPGKAPAKLLEARIGREAMLDQIVNDALPSRYGQAVAESDVQPLGRPNIEVTKKEYGQDLQFTAEVDIRPKISPPDLSALTVSVDPIEIGEDDVDAELQSLRTRFGTLTAVDRPVAVGDVVSIDLSATVDGEDIPNAAAEGLSHEVGSGRLIAGLDDAVVGLSADESRVFTAKLAAGEHAGQEAQVTVTVRSVKERELPEPDDEFAQLASEFDSIDELRASLSDQVRQAKRAQQAEQIRNATIDALLEQVDVPLPESYVQAQFDSVLHSALSGLNHDEARFNELLVEQGSSRAAFDAEARTASEKDVKRQLLLDALADELQVQVGQDDLTERLVTTSRQYGIEPQQLFGYLQERNQLPTMFADVRRELAIRAAVEAATVTDSDGNTIDTSEFFGKRVSAGEAEEAEPADEGAARAASDEATT</sequence>
<keyword id="KW-0131">Cell cycle</keyword>
<keyword id="KW-0132">Cell division</keyword>
<keyword id="KW-0143">Chaperone</keyword>
<keyword id="KW-0963">Cytoplasm</keyword>
<keyword id="KW-0413">Isomerase</keyword>
<keyword id="KW-1185">Reference proteome</keyword>
<keyword id="KW-0697">Rotamase</keyword>
<keyword id="KW-0346">Stress response</keyword>
<protein>
    <recommendedName>
        <fullName evidence="1 4">Trigger factor</fullName>
        <shortName evidence="1">TF</shortName>
        <ecNumber evidence="1 3">5.2.1.8</ecNumber>
    </recommendedName>
    <alternativeName>
        <fullName evidence="1">PPIase</fullName>
    </alternativeName>
</protein>
<dbReference type="EC" id="5.2.1.8" evidence="1 3"/>
<dbReference type="EMBL" id="AL123456">
    <property type="protein sequence ID" value="CCP45255.1"/>
    <property type="molecule type" value="Genomic_DNA"/>
</dbReference>
<dbReference type="PIR" id="E70865">
    <property type="entry name" value="E70865"/>
</dbReference>
<dbReference type="RefSeq" id="NP_216978.1">
    <property type="nucleotide sequence ID" value="NC_000962.3"/>
</dbReference>
<dbReference type="RefSeq" id="WP_003899331.1">
    <property type="nucleotide sequence ID" value="NZ_NVQJ01000024.1"/>
</dbReference>
<dbReference type="SMR" id="P9WG55"/>
<dbReference type="FunCoup" id="P9WG55">
    <property type="interactions" value="288"/>
</dbReference>
<dbReference type="STRING" id="83332.Rv2462c"/>
<dbReference type="PaxDb" id="83332-Rv2462c"/>
<dbReference type="DNASU" id="888615"/>
<dbReference type="GeneID" id="888615"/>
<dbReference type="KEGG" id="mtu:Rv2462c"/>
<dbReference type="KEGG" id="mtv:RVBD_2462c"/>
<dbReference type="TubercuList" id="Rv2462c"/>
<dbReference type="eggNOG" id="COG0544">
    <property type="taxonomic scope" value="Bacteria"/>
</dbReference>
<dbReference type="InParanoid" id="P9WG55"/>
<dbReference type="OrthoDB" id="9767721at2"/>
<dbReference type="PhylomeDB" id="P9WG55"/>
<dbReference type="Proteomes" id="UP000001584">
    <property type="component" value="Chromosome"/>
</dbReference>
<dbReference type="GO" id="GO:0005829">
    <property type="term" value="C:cytosol"/>
    <property type="evidence" value="ECO:0007005"/>
    <property type="project" value="MTBBASE"/>
</dbReference>
<dbReference type="GO" id="GO:0009274">
    <property type="term" value="C:peptidoglycan-based cell wall"/>
    <property type="evidence" value="ECO:0007005"/>
    <property type="project" value="MTBBASE"/>
</dbReference>
<dbReference type="GO" id="GO:0005886">
    <property type="term" value="C:plasma membrane"/>
    <property type="evidence" value="ECO:0007005"/>
    <property type="project" value="MTBBASE"/>
</dbReference>
<dbReference type="GO" id="GO:0003755">
    <property type="term" value="F:peptidyl-prolyl cis-trans isomerase activity"/>
    <property type="evidence" value="ECO:0000318"/>
    <property type="project" value="GO_Central"/>
</dbReference>
<dbReference type="GO" id="GO:0044183">
    <property type="term" value="F:protein folding chaperone"/>
    <property type="evidence" value="ECO:0000318"/>
    <property type="project" value="GO_Central"/>
</dbReference>
<dbReference type="GO" id="GO:0043022">
    <property type="term" value="F:ribosome binding"/>
    <property type="evidence" value="ECO:0000318"/>
    <property type="project" value="GO_Central"/>
</dbReference>
<dbReference type="GO" id="GO:0051083">
    <property type="term" value="P:'de novo' cotranslational protein folding"/>
    <property type="evidence" value="ECO:0000318"/>
    <property type="project" value="GO_Central"/>
</dbReference>
<dbReference type="GO" id="GO:0051301">
    <property type="term" value="P:cell division"/>
    <property type="evidence" value="ECO:0007669"/>
    <property type="project" value="UniProtKB-KW"/>
</dbReference>
<dbReference type="GO" id="GO:0009267">
    <property type="term" value="P:cellular response to starvation"/>
    <property type="evidence" value="ECO:0000270"/>
    <property type="project" value="MTBBASE"/>
</dbReference>
<dbReference type="GO" id="GO:0061077">
    <property type="term" value="P:chaperone-mediated protein folding"/>
    <property type="evidence" value="ECO:0000318"/>
    <property type="project" value="GO_Central"/>
</dbReference>
<dbReference type="GO" id="GO:0015031">
    <property type="term" value="P:protein transport"/>
    <property type="evidence" value="ECO:0007669"/>
    <property type="project" value="UniProtKB-UniRule"/>
</dbReference>
<dbReference type="GO" id="GO:0043335">
    <property type="term" value="P:protein unfolding"/>
    <property type="evidence" value="ECO:0000318"/>
    <property type="project" value="GO_Central"/>
</dbReference>
<dbReference type="GO" id="GO:0046677">
    <property type="term" value="P:response to antibiotic"/>
    <property type="evidence" value="ECO:0000270"/>
    <property type="project" value="MTBBASE"/>
</dbReference>
<dbReference type="FunFam" id="3.10.50.40:FF:000019">
    <property type="entry name" value="Trigger factor"/>
    <property type="match status" value="1"/>
</dbReference>
<dbReference type="FunFam" id="3.30.70.1050:FF:000003">
    <property type="entry name" value="Trigger factor"/>
    <property type="match status" value="1"/>
</dbReference>
<dbReference type="Gene3D" id="3.10.50.40">
    <property type="match status" value="1"/>
</dbReference>
<dbReference type="Gene3D" id="3.30.70.1050">
    <property type="entry name" value="Trigger factor ribosome-binding domain"/>
    <property type="match status" value="1"/>
</dbReference>
<dbReference type="Gene3D" id="1.10.3120.10">
    <property type="entry name" value="Trigger factor, C-terminal domain"/>
    <property type="match status" value="1"/>
</dbReference>
<dbReference type="HAMAP" id="MF_00303">
    <property type="entry name" value="Trigger_factor_Tig"/>
    <property type="match status" value="1"/>
</dbReference>
<dbReference type="InterPro" id="IPR046357">
    <property type="entry name" value="PPIase_dom_sf"/>
</dbReference>
<dbReference type="InterPro" id="IPR001179">
    <property type="entry name" value="PPIase_FKBP_dom"/>
</dbReference>
<dbReference type="InterPro" id="IPR005215">
    <property type="entry name" value="Trig_fac"/>
</dbReference>
<dbReference type="InterPro" id="IPR008880">
    <property type="entry name" value="Trigger_fac_C"/>
</dbReference>
<dbReference type="InterPro" id="IPR037041">
    <property type="entry name" value="Trigger_fac_C_sf"/>
</dbReference>
<dbReference type="InterPro" id="IPR008881">
    <property type="entry name" value="Trigger_fac_ribosome-bd_bac"/>
</dbReference>
<dbReference type="InterPro" id="IPR036611">
    <property type="entry name" value="Trigger_fac_ribosome-bd_sf"/>
</dbReference>
<dbReference type="InterPro" id="IPR027304">
    <property type="entry name" value="Trigger_fact/SurA_dom_sf"/>
</dbReference>
<dbReference type="NCBIfam" id="TIGR00115">
    <property type="entry name" value="tig"/>
    <property type="match status" value="1"/>
</dbReference>
<dbReference type="PANTHER" id="PTHR30560">
    <property type="entry name" value="TRIGGER FACTOR CHAPERONE AND PEPTIDYL-PROLYL CIS/TRANS ISOMERASE"/>
    <property type="match status" value="1"/>
</dbReference>
<dbReference type="PANTHER" id="PTHR30560:SF3">
    <property type="entry name" value="TRIGGER FACTOR-LIKE PROTEIN TIG, CHLOROPLASTIC"/>
    <property type="match status" value="1"/>
</dbReference>
<dbReference type="Pfam" id="PF00254">
    <property type="entry name" value="FKBP_C"/>
    <property type="match status" value="1"/>
</dbReference>
<dbReference type="Pfam" id="PF05698">
    <property type="entry name" value="Trigger_C"/>
    <property type="match status" value="1"/>
</dbReference>
<dbReference type="Pfam" id="PF05697">
    <property type="entry name" value="Trigger_N"/>
    <property type="match status" value="1"/>
</dbReference>
<dbReference type="PIRSF" id="PIRSF003095">
    <property type="entry name" value="Trigger_factor"/>
    <property type="match status" value="1"/>
</dbReference>
<dbReference type="SUPFAM" id="SSF54534">
    <property type="entry name" value="FKBP-like"/>
    <property type="match status" value="1"/>
</dbReference>
<dbReference type="SUPFAM" id="SSF109998">
    <property type="entry name" value="Triger factor/SurA peptide-binding domain-like"/>
    <property type="match status" value="1"/>
</dbReference>
<dbReference type="SUPFAM" id="SSF102735">
    <property type="entry name" value="Trigger factor ribosome-binding domain"/>
    <property type="match status" value="1"/>
</dbReference>
<reference key="1">
    <citation type="journal article" date="1998" name="Nature">
        <title>Deciphering the biology of Mycobacterium tuberculosis from the complete genome sequence.</title>
        <authorList>
            <person name="Cole S.T."/>
            <person name="Brosch R."/>
            <person name="Parkhill J."/>
            <person name="Garnier T."/>
            <person name="Churcher C.M."/>
            <person name="Harris D.E."/>
            <person name="Gordon S.V."/>
            <person name="Eiglmeier K."/>
            <person name="Gas S."/>
            <person name="Barry C.E. III"/>
            <person name="Tekaia F."/>
            <person name="Badcock K."/>
            <person name="Basham D."/>
            <person name="Brown D."/>
            <person name="Chillingworth T."/>
            <person name="Connor R."/>
            <person name="Davies R.M."/>
            <person name="Devlin K."/>
            <person name="Feltwell T."/>
            <person name="Gentles S."/>
            <person name="Hamlin N."/>
            <person name="Holroyd S."/>
            <person name="Hornsby T."/>
            <person name="Jagels K."/>
            <person name="Krogh A."/>
            <person name="McLean J."/>
            <person name="Moule S."/>
            <person name="Murphy L.D."/>
            <person name="Oliver S."/>
            <person name="Osborne J."/>
            <person name="Quail M.A."/>
            <person name="Rajandream M.A."/>
            <person name="Rogers J."/>
            <person name="Rutter S."/>
            <person name="Seeger K."/>
            <person name="Skelton S."/>
            <person name="Squares S."/>
            <person name="Squares R."/>
            <person name="Sulston J.E."/>
            <person name="Taylor K."/>
            <person name="Whitehead S."/>
            <person name="Barrell B.G."/>
        </authorList>
    </citation>
    <scope>NUCLEOTIDE SEQUENCE [LARGE SCALE GENOMIC DNA]</scope>
    <source>
        <strain>ATCC 25618 / H37Rv</strain>
    </source>
</reference>
<reference key="2">
    <citation type="journal article" date="2011" name="Mol. Cell. Proteomics">
        <title>Proteogenomic analysis of Mycobacterium tuberculosis by high resolution mass spectrometry.</title>
        <authorList>
            <person name="Kelkar D.S."/>
            <person name="Kumar D."/>
            <person name="Kumar P."/>
            <person name="Balakrishnan L."/>
            <person name="Muthusamy B."/>
            <person name="Yadav A.K."/>
            <person name="Shrivastava P."/>
            <person name="Marimuthu A."/>
            <person name="Anand S."/>
            <person name="Sundaram H."/>
            <person name="Kingsbury R."/>
            <person name="Harsha H.C."/>
            <person name="Nair B."/>
            <person name="Prasad T.S."/>
            <person name="Chauhan D.S."/>
            <person name="Katoch K."/>
            <person name="Katoch V.M."/>
            <person name="Kumar P."/>
            <person name="Chaerkady R."/>
            <person name="Ramachandran S."/>
            <person name="Dash D."/>
            <person name="Pandey A."/>
        </authorList>
    </citation>
    <scope>IDENTIFICATION BY MASS SPECTROMETRY [LARGE SCALE ANALYSIS]</scope>
    <source>
        <strain>ATCC 25618 / H37Rv</strain>
    </source>
</reference>
<reference key="3">
    <citation type="journal article" date="2022" name="Biology">
        <title>M.tb-Rv2462c of Mycobacterium tuberculosis Shows Chaperone-like Activity and Plays a Role in Stress Adaptation and Immunomodulation.</title>
        <authorList>
            <person name="Khawary M."/>
            <person name="Rakshit R."/>
            <person name="Bahl A."/>
            <person name="Juneja P."/>
            <person name="Kant S."/>
            <person name="Pandey S."/>
            <person name="Tripathi D."/>
        </authorList>
    </citation>
    <scope>FUNCTION AS A CHAPERONE AND IN STRESS RESPONSE</scope>
    <scope>CATALYTIC ACTIVITY</scope>
    <scope>EXPRESSION IN M.SMEGMATIS</scope>
    <source>
        <strain>H37Rv</strain>
    </source>
</reference>